<reference key="1">
    <citation type="submission" date="2009-02" db="EMBL/GenBank/DDBJ databases">
        <title>Vibrio splendidus str. LGP32 complete genome.</title>
        <authorList>
            <person name="Mazel D."/>
            <person name="Le Roux F."/>
        </authorList>
    </citation>
    <scope>NUCLEOTIDE SEQUENCE [LARGE SCALE GENOMIC DNA]</scope>
    <source>
        <strain>LGP32</strain>
    </source>
</reference>
<proteinExistence type="inferred from homology"/>
<comment type="function">
    <text evidence="1">Catalyzes the oxidation of 5,10-methylenetetrahydrofolate to 5,10-methenyltetrahydrofolate and then the hydrolysis of 5,10-methenyltetrahydrofolate to 10-formyltetrahydrofolate.</text>
</comment>
<comment type="catalytic activity">
    <reaction evidence="1">
        <text>(6R)-5,10-methylene-5,6,7,8-tetrahydrofolate + NADP(+) = (6R)-5,10-methenyltetrahydrofolate + NADPH</text>
        <dbReference type="Rhea" id="RHEA:22812"/>
        <dbReference type="ChEBI" id="CHEBI:15636"/>
        <dbReference type="ChEBI" id="CHEBI:57455"/>
        <dbReference type="ChEBI" id="CHEBI:57783"/>
        <dbReference type="ChEBI" id="CHEBI:58349"/>
        <dbReference type="EC" id="1.5.1.5"/>
    </reaction>
</comment>
<comment type="catalytic activity">
    <reaction evidence="1">
        <text>(6R)-5,10-methenyltetrahydrofolate + H2O = (6R)-10-formyltetrahydrofolate + H(+)</text>
        <dbReference type="Rhea" id="RHEA:23700"/>
        <dbReference type="ChEBI" id="CHEBI:15377"/>
        <dbReference type="ChEBI" id="CHEBI:15378"/>
        <dbReference type="ChEBI" id="CHEBI:57455"/>
        <dbReference type="ChEBI" id="CHEBI:195366"/>
        <dbReference type="EC" id="3.5.4.9"/>
    </reaction>
</comment>
<comment type="pathway">
    <text evidence="1">One-carbon metabolism; tetrahydrofolate interconversion.</text>
</comment>
<comment type="subunit">
    <text evidence="1">Homodimer.</text>
</comment>
<comment type="similarity">
    <text evidence="1">Belongs to the tetrahydrofolate dehydrogenase/cyclohydrolase family.</text>
</comment>
<sequence length="285" mass="30548">MTAQNIDGKLISQTVRSEVAARVKARTQAGLRAPGLAVVLVGEDPASQVYVGSKRKACEEVGFVSKSYDLPATATEDELLTLVDQLNEDPEIDGILVQLPLPAGIDSTQVLERITPEKDVDGFHPYNVGRLAQRMPKLRSCTPKGIITLLDRYNIDLRGKHAVVVGASNIVGRPMTLELLLAGCTTTTCHRFTKDLEGHVRQADVVVVAVGKPNFIPGAWIKKGAVVVDVGINRLESGKLVGDVEYDVAKESASFITPVPGGVGPMTVASLIENTMIACEQFHSK</sequence>
<protein>
    <recommendedName>
        <fullName evidence="1">Bifunctional protein FolD</fullName>
    </recommendedName>
    <domain>
        <recommendedName>
            <fullName evidence="1">Methylenetetrahydrofolate dehydrogenase</fullName>
            <ecNumber evidence="1">1.5.1.5</ecNumber>
        </recommendedName>
    </domain>
    <domain>
        <recommendedName>
            <fullName evidence="1">Methenyltetrahydrofolate cyclohydrolase</fullName>
            <ecNumber evidence="1">3.5.4.9</ecNumber>
        </recommendedName>
    </domain>
</protein>
<accession>B7VL71</accession>
<gene>
    <name evidence="1" type="primary">folD</name>
    <name type="ordered locus">VS_0889</name>
</gene>
<organism>
    <name type="scientific">Vibrio atlanticus (strain LGP32)</name>
    <name type="common">Vibrio splendidus (strain Mel32)</name>
    <dbReference type="NCBI Taxonomy" id="575788"/>
    <lineage>
        <taxon>Bacteria</taxon>
        <taxon>Pseudomonadati</taxon>
        <taxon>Pseudomonadota</taxon>
        <taxon>Gammaproteobacteria</taxon>
        <taxon>Vibrionales</taxon>
        <taxon>Vibrionaceae</taxon>
        <taxon>Vibrio</taxon>
    </lineage>
</organism>
<dbReference type="EC" id="1.5.1.5" evidence="1"/>
<dbReference type="EC" id="3.5.4.9" evidence="1"/>
<dbReference type="EMBL" id="FM954972">
    <property type="protein sequence ID" value="CAV17898.1"/>
    <property type="molecule type" value="Genomic_DNA"/>
</dbReference>
<dbReference type="SMR" id="B7VL71"/>
<dbReference type="STRING" id="575788.VS_0889"/>
<dbReference type="KEGG" id="vsp:VS_0889"/>
<dbReference type="eggNOG" id="COG0190">
    <property type="taxonomic scope" value="Bacteria"/>
</dbReference>
<dbReference type="HOGENOM" id="CLU_034045_2_1_6"/>
<dbReference type="UniPathway" id="UPA00193"/>
<dbReference type="Proteomes" id="UP000009100">
    <property type="component" value="Chromosome 1"/>
</dbReference>
<dbReference type="GO" id="GO:0005829">
    <property type="term" value="C:cytosol"/>
    <property type="evidence" value="ECO:0007669"/>
    <property type="project" value="TreeGrafter"/>
</dbReference>
<dbReference type="GO" id="GO:0004477">
    <property type="term" value="F:methenyltetrahydrofolate cyclohydrolase activity"/>
    <property type="evidence" value="ECO:0007669"/>
    <property type="project" value="UniProtKB-UniRule"/>
</dbReference>
<dbReference type="GO" id="GO:0004488">
    <property type="term" value="F:methylenetetrahydrofolate dehydrogenase (NADP+) activity"/>
    <property type="evidence" value="ECO:0007669"/>
    <property type="project" value="UniProtKB-UniRule"/>
</dbReference>
<dbReference type="GO" id="GO:0000105">
    <property type="term" value="P:L-histidine biosynthetic process"/>
    <property type="evidence" value="ECO:0007669"/>
    <property type="project" value="UniProtKB-KW"/>
</dbReference>
<dbReference type="GO" id="GO:0009086">
    <property type="term" value="P:methionine biosynthetic process"/>
    <property type="evidence" value="ECO:0007669"/>
    <property type="project" value="UniProtKB-KW"/>
</dbReference>
<dbReference type="GO" id="GO:0006164">
    <property type="term" value="P:purine nucleotide biosynthetic process"/>
    <property type="evidence" value="ECO:0007669"/>
    <property type="project" value="UniProtKB-KW"/>
</dbReference>
<dbReference type="GO" id="GO:0035999">
    <property type="term" value="P:tetrahydrofolate interconversion"/>
    <property type="evidence" value="ECO:0007669"/>
    <property type="project" value="UniProtKB-UniRule"/>
</dbReference>
<dbReference type="CDD" id="cd01080">
    <property type="entry name" value="NAD_bind_m-THF_DH_Cyclohyd"/>
    <property type="match status" value="1"/>
</dbReference>
<dbReference type="FunFam" id="3.40.50.10860:FF:000001">
    <property type="entry name" value="Bifunctional protein FolD"/>
    <property type="match status" value="1"/>
</dbReference>
<dbReference type="FunFam" id="3.40.50.720:FF:000006">
    <property type="entry name" value="Bifunctional protein FolD"/>
    <property type="match status" value="1"/>
</dbReference>
<dbReference type="Gene3D" id="3.40.50.10860">
    <property type="entry name" value="Leucine Dehydrogenase, chain A, domain 1"/>
    <property type="match status" value="1"/>
</dbReference>
<dbReference type="Gene3D" id="3.40.50.720">
    <property type="entry name" value="NAD(P)-binding Rossmann-like Domain"/>
    <property type="match status" value="1"/>
</dbReference>
<dbReference type="HAMAP" id="MF_01576">
    <property type="entry name" value="THF_DHG_CYH"/>
    <property type="match status" value="1"/>
</dbReference>
<dbReference type="InterPro" id="IPR046346">
    <property type="entry name" value="Aminoacid_DH-like_N_sf"/>
</dbReference>
<dbReference type="InterPro" id="IPR036291">
    <property type="entry name" value="NAD(P)-bd_dom_sf"/>
</dbReference>
<dbReference type="InterPro" id="IPR000672">
    <property type="entry name" value="THF_DH/CycHdrlase"/>
</dbReference>
<dbReference type="InterPro" id="IPR020630">
    <property type="entry name" value="THF_DH/CycHdrlase_cat_dom"/>
</dbReference>
<dbReference type="InterPro" id="IPR020867">
    <property type="entry name" value="THF_DH/CycHdrlase_CS"/>
</dbReference>
<dbReference type="InterPro" id="IPR020631">
    <property type="entry name" value="THF_DH/CycHdrlase_NAD-bd_dom"/>
</dbReference>
<dbReference type="NCBIfam" id="NF008058">
    <property type="entry name" value="PRK10792.1"/>
    <property type="match status" value="1"/>
</dbReference>
<dbReference type="NCBIfam" id="NF010783">
    <property type="entry name" value="PRK14186.1"/>
    <property type="match status" value="1"/>
</dbReference>
<dbReference type="PANTHER" id="PTHR48099:SF5">
    <property type="entry name" value="C-1-TETRAHYDROFOLATE SYNTHASE, CYTOPLASMIC"/>
    <property type="match status" value="1"/>
</dbReference>
<dbReference type="PANTHER" id="PTHR48099">
    <property type="entry name" value="C-1-TETRAHYDROFOLATE SYNTHASE, CYTOPLASMIC-RELATED"/>
    <property type="match status" value="1"/>
</dbReference>
<dbReference type="Pfam" id="PF00763">
    <property type="entry name" value="THF_DHG_CYH"/>
    <property type="match status" value="1"/>
</dbReference>
<dbReference type="Pfam" id="PF02882">
    <property type="entry name" value="THF_DHG_CYH_C"/>
    <property type="match status" value="1"/>
</dbReference>
<dbReference type="PRINTS" id="PR00085">
    <property type="entry name" value="THFDHDRGNASE"/>
</dbReference>
<dbReference type="SUPFAM" id="SSF53223">
    <property type="entry name" value="Aminoacid dehydrogenase-like, N-terminal domain"/>
    <property type="match status" value="1"/>
</dbReference>
<dbReference type="SUPFAM" id="SSF51735">
    <property type="entry name" value="NAD(P)-binding Rossmann-fold domains"/>
    <property type="match status" value="1"/>
</dbReference>
<dbReference type="PROSITE" id="PS00766">
    <property type="entry name" value="THF_DHG_CYH_1"/>
    <property type="match status" value="1"/>
</dbReference>
<dbReference type="PROSITE" id="PS00767">
    <property type="entry name" value="THF_DHG_CYH_2"/>
    <property type="match status" value="1"/>
</dbReference>
<name>FOLD_VIBA3</name>
<feature type="chain" id="PRO_1000185632" description="Bifunctional protein FolD">
    <location>
        <begin position="1"/>
        <end position="285"/>
    </location>
</feature>
<feature type="binding site" evidence="1">
    <location>
        <begin position="166"/>
        <end position="168"/>
    </location>
    <ligand>
        <name>NADP(+)</name>
        <dbReference type="ChEBI" id="CHEBI:58349"/>
    </ligand>
</feature>
<feature type="binding site" evidence="1">
    <location>
        <position position="232"/>
    </location>
    <ligand>
        <name>NADP(+)</name>
        <dbReference type="ChEBI" id="CHEBI:58349"/>
    </ligand>
</feature>
<keyword id="KW-0028">Amino-acid biosynthesis</keyword>
<keyword id="KW-0368">Histidine biosynthesis</keyword>
<keyword id="KW-0378">Hydrolase</keyword>
<keyword id="KW-0486">Methionine biosynthesis</keyword>
<keyword id="KW-0511">Multifunctional enzyme</keyword>
<keyword id="KW-0521">NADP</keyword>
<keyword id="KW-0554">One-carbon metabolism</keyword>
<keyword id="KW-0560">Oxidoreductase</keyword>
<keyword id="KW-0658">Purine biosynthesis</keyword>
<evidence type="ECO:0000255" key="1">
    <source>
        <dbReference type="HAMAP-Rule" id="MF_01576"/>
    </source>
</evidence>